<comment type="function">
    <text evidence="1">Catalyzes the sequential NAD-dependent oxidations of L-histidinol to L-histidinaldehyde and then to L-histidine.</text>
</comment>
<comment type="catalytic activity">
    <reaction>
        <text>L-histidinol + 2 NAD(+) + H2O = L-histidine + 2 NADH + 3 H(+)</text>
        <dbReference type="Rhea" id="RHEA:20641"/>
        <dbReference type="ChEBI" id="CHEBI:15377"/>
        <dbReference type="ChEBI" id="CHEBI:15378"/>
        <dbReference type="ChEBI" id="CHEBI:57540"/>
        <dbReference type="ChEBI" id="CHEBI:57595"/>
        <dbReference type="ChEBI" id="CHEBI:57699"/>
        <dbReference type="ChEBI" id="CHEBI:57945"/>
        <dbReference type="EC" id="1.1.1.23"/>
    </reaction>
</comment>
<comment type="cofactor">
    <cofactor evidence="1">
        <name>Zn(2+)</name>
        <dbReference type="ChEBI" id="CHEBI:29105"/>
    </cofactor>
    <text evidence="1">Binds 1 zinc ion per subunit.</text>
</comment>
<comment type="pathway">
    <text>Amino-acid biosynthesis; L-histidine biosynthesis; L-histidine from 5-phospho-alpha-D-ribose 1-diphosphate: step 9/9.</text>
</comment>
<comment type="similarity">
    <text evidence="2">Belongs to the histidinol dehydrogenase family.</text>
</comment>
<dbReference type="EC" id="1.1.1.23"/>
<dbReference type="EMBL" id="X65542">
    <property type="protein sequence ID" value="CAA46509.1"/>
    <property type="molecule type" value="Genomic_DNA"/>
</dbReference>
<dbReference type="PIR" id="S26209">
    <property type="entry name" value="S26209"/>
</dbReference>
<dbReference type="SMR" id="P28736"/>
<dbReference type="OMA" id="YIAGPNH"/>
<dbReference type="UniPathway" id="UPA00031">
    <property type="reaction ID" value="UER00014"/>
</dbReference>
<dbReference type="GO" id="GO:0005829">
    <property type="term" value="C:cytosol"/>
    <property type="evidence" value="ECO:0007669"/>
    <property type="project" value="TreeGrafter"/>
</dbReference>
<dbReference type="GO" id="GO:0004399">
    <property type="term" value="F:histidinol dehydrogenase activity"/>
    <property type="evidence" value="ECO:0007669"/>
    <property type="project" value="UniProtKB-UniRule"/>
</dbReference>
<dbReference type="GO" id="GO:0051287">
    <property type="term" value="F:NAD binding"/>
    <property type="evidence" value="ECO:0007669"/>
    <property type="project" value="InterPro"/>
</dbReference>
<dbReference type="GO" id="GO:0008270">
    <property type="term" value="F:zinc ion binding"/>
    <property type="evidence" value="ECO:0007669"/>
    <property type="project" value="UniProtKB-UniRule"/>
</dbReference>
<dbReference type="GO" id="GO:0000105">
    <property type="term" value="P:L-histidine biosynthetic process"/>
    <property type="evidence" value="ECO:0007669"/>
    <property type="project" value="UniProtKB-UniRule"/>
</dbReference>
<dbReference type="CDD" id="cd06572">
    <property type="entry name" value="Histidinol_dh"/>
    <property type="match status" value="1"/>
</dbReference>
<dbReference type="FunFam" id="3.40.50.1980:FF:000001">
    <property type="entry name" value="Histidinol dehydrogenase"/>
    <property type="match status" value="1"/>
</dbReference>
<dbReference type="Gene3D" id="1.20.5.1300">
    <property type="match status" value="1"/>
</dbReference>
<dbReference type="Gene3D" id="3.40.50.1980">
    <property type="entry name" value="Nitrogenase molybdenum iron protein domain"/>
    <property type="match status" value="2"/>
</dbReference>
<dbReference type="HAMAP" id="MF_01024">
    <property type="entry name" value="HisD"/>
    <property type="match status" value="1"/>
</dbReference>
<dbReference type="InterPro" id="IPR016161">
    <property type="entry name" value="Ald_DH/histidinol_DH"/>
</dbReference>
<dbReference type="InterPro" id="IPR001692">
    <property type="entry name" value="Histidinol_DH_CS"/>
</dbReference>
<dbReference type="InterPro" id="IPR022695">
    <property type="entry name" value="Histidinol_DH_monofunct"/>
</dbReference>
<dbReference type="InterPro" id="IPR012131">
    <property type="entry name" value="Hstdl_DH"/>
</dbReference>
<dbReference type="NCBIfam" id="TIGR00069">
    <property type="entry name" value="hisD"/>
    <property type="match status" value="1"/>
</dbReference>
<dbReference type="PANTHER" id="PTHR21256:SF2">
    <property type="entry name" value="HISTIDINE BIOSYNTHESIS TRIFUNCTIONAL PROTEIN"/>
    <property type="match status" value="1"/>
</dbReference>
<dbReference type="PANTHER" id="PTHR21256">
    <property type="entry name" value="HISTIDINOL DEHYDROGENASE HDH"/>
    <property type="match status" value="1"/>
</dbReference>
<dbReference type="Pfam" id="PF00815">
    <property type="entry name" value="Histidinol_dh"/>
    <property type="match status" value="1"/>
</dbReference>
<dbReference type="PIRSF" id="PIRSF000099">
    <property type="entry name" value="Histidinol_dh"/>
    <property type="match status" value="1"/>
</dbReference>
<dbReference type="PRINTS" id="PR00083">
    <property type="entry name" value="HOLDHDRGNASE"/>
</dbReference>
<dbReference type="SUPFAM" id="SSF53720">
    <property type="entry name" value="ALDH-like"/>
    <property type="match status" value="1"/>
</dbReference>
<dbReference type="PROSITE" id="PS00611">
    <property type="entry name" value="HISOL_DEHYDROGENASE"/>
    <property type="match status" value="1"/>
</dbReference>
<protein>
    <recommendedName>
        <fullName>Histidinol dehydrogenase</fullName>
        <shortName>HDH</shortName>
        <ecNumber>1.1.1.23</ecNumber>
    </recommendedName>
</protein>
<evidence type="ECO:0000250" key="1"/>
<evidence type="ECO:0000305" key="2"/>
<organism>
    <name type="scientific">Mycolicibacterium smegmatis</name>
    <name type="common">Mycobacterium smegmatis</name>
    <dbReference type="NCBI Taxonomy" id="1772"/>
    <lineage>
        <taxon>Bacteria</taxon>
        <taxon>Bacillati</taxon>
        <taxon>Actinomycetota</taxon>
        <taxon>Actinomycetes</taxon>
        <taxon>Mycobacteriales</taxon>
        <taxon>Mycobacteriaceae</taxon>
        <taxon>Mycolicibacterium</taxon>
    </lineage>
</organism>
<accession>P28736</accession>
<sequence length="445" mass="46703">MNMMAKFQMSRIDLRNRVLSAAQLRSALPRGGVDVDAVVPKVRPIVDAVAQRGAQAALEYGESFDGIRPETVRVPRELLSQALENLDADVRAALQVSIDRARAVHADQRRTDTTTTLAPGATVTERWVPVERVGLYVPGGNAVYPSSVVMNVVPAQTAGVDSMVIASPPQGQFGGRPHPTILAAAALLGVDEVWAVGGAQAVALLAYGGTDTDGAELAPVDMITGPGNIYVTAAKRICRSQVGIDAEAGPTEIAILADHTADPVHVAADLISQAEHDEMAASVLVTDSETLAEATDRELANQLATTKHVERVTAALSGKQSAIVLVDDIDAGVRTVNAYAAEHLEIQTVDAPGVAGRIRSAGAIFVGAWSPVSLGDYCAGSNHVLPTAGCARHSSGLSVQTFLRGIHVVEYDEAALKDVSGHVITLSKAEDLPAHGEAVRRRFER</sequence>
<gene>
    <name type="primary">hisD</name>
</gene>
<name>HISX_MYCSM</name>
<feature type="chain" id="PRO_0000135798" description="Histidinol dehydrogenase">
    <location>
        <begin position="1"/>
        <end position="445"/>
    </location>
</feature>
<feature type="active site" description="Proton acceptor" evidence="1">
    <location>
        <position position="342"/>
    </location>
</feature>
<feature type="active site" description="Proton acceptor" evidence="1">
    <location>
        <position position="343"/>
    </location>
</feature>
<feature type="binding site" evidence="1">
    <location>
        <position position="136"/>
    </location>
    <ligand>
        <name>NAD(+)</name>
        <dbReference type="ChEBI" id="CHEBI:57540"/>
    </ligand>
</feature>
<feature type="binding site" evidence="1">
    <location>
        <position position="200"/>
    </location>
    <ligand>
        <name>NAD(+)</name>
        <dbReference type="ChEBI" id="CHEBI:57540"/>
    </ligand>
</feature>
<feature type="binding site" evidence="1">
    <location>
        <position position="228"/>
    </location>
    <ligand>
        <name>NAD(+)</name>
        <dbReference type="ChEBI" id="CHEBI:57540"/>
    </ligand>
</feature>
<feature type="binding site" evidence="1">
    <location>
        <position position="251"/>
    </location>
    <ligand>
        <name>substrate</name>
    </ligand>
</feature>
<feature type="binding site" evidence="1">
    <location>
        <position position="273"/>
    </location>
    <ligand>
        <name>substrate</name>
    </ligand>
</feature>
<feature type="binding site" evidence="1">
    <location>
        <position position="273"/>
    </location>
    <ligand>
        <name>Zn(2+)</name>
        <dbReference type="ChEBI" id="CHEBI:29105"/>
    </ligand>
</feature>
<feature type="binding site" evidence="1">
    <location>
        <position position="276"/>
    </location>
    <ligand>
        <name>substrate</name>
    </ligand>
</feature>
<feature type="binding site" evidence="1">
    <location>
        <position position="276"/>
    </location>
    <ligand>
        <name>Zn(2+)</name>
        <dbReference type="ChEBI" id="CHEBI:29105"/>
    </ligand>
</feature>
<feature type="binding site" evidence="1">
    <location>
        <position position="343"/>
    </location>
    <ligand>
        <name>substrate</name>
    </ligand>
</feature>
<feature type="binding site" evidence="1">
    <location>
        <position position="376"/>
    </location>
    <ligand>
        <name>substrate</name>
    </ligand>
</feature>
<feature type="binding site" evidence="1">
    <location>
        <position position="376"/>
    </location>
    <ligand>
        <name>Zn(2+)</name>
        <dbReference type="ChEBI" id="CHEBI:29105"/>
    </ligand>
</feature>
<feature type="binding site" evidence="1">
    <location>
        <position position="430"/>
    </location>
    <ligand>
        <name>substrate</name>
    </ligand>
</feature>
<feature type="binding site" evidence="1">
    <location>
        <position position="435"/>
    </location>
    <ligand>
        <name>substrate</name>
    </ligand>
</feature>
<feature type="binding site" evidence="1">
    <location>
        <position position="435"/>
    </location>
    <ligand>
        <name>Zn(2+)</name>
        <dbReference type="ChEBI" id="CHEBI:29105"/>
    </ligand>
</feature>
<reference key="1">
    <citation type="journal article" date="1992" name="Mol. Microbiol.">
        <title>Cloning of mycobacterial histidine synthesis genes by complementation of a Mycobacterium smegmatis auxotroph.</title>
        <authorList>
            <person name="Hinshelwood S."/>
            <person name="Stoker N.G."/>
        </authorList>
    </citation>
    <scope>NUCLEOTIDE SEQUENCE [GENOMIC DNA]</scope>
    <source>
        <strain>ATCC 607 / DSM 43465 / JCM 20379 / NBRC 3207 / NRRL B-692</strain>
    </source>
</reference>
<keyword id="KW-0028">Amino-acid biosynthesis</keyword>
<keyword id="KW-0368">Histidine biosynthesis</keyword>
<keyword id="KW-0479">Metal-binding</keyword>
<keyword id="KW-0520">NAD</keyword>
<keyword id="KW-0560">Oxidoreductase</keyword>
<keyword id="KW-0862">Zinc</keyword>
<proteinExistence type="inferred from homology"/>